<dbReference type="EC" id="2.4.1.170"/>
<dbReference type="EMBL" id="AB292164">
    <property type="protein sequence ID" value="BAF64416.1"/>
    <property type="molecule type" value="mRNA"/>
</dbReference>
<dbReference type="RefSeq" id="NP_001235161.1">
    <property type="nucleotide sequence ID" value="NM_001248232.1"/>
</dbReference>
<dbReference type="SMR" id="A6BM07"/>
<dbReference type="STRING" id="3847.A6BM07"/>
<dbReference type="CAZy" id="GT1">
    <property type="family name" value="Glycosyltransferase Family 1"/>
</dbReference>
<dbReference type="PaxDb" id="3847-GLYMA16G29400.1"/>
<dbReference type="EnsemblPlants" id="KRH08805">
    <property type="protein sequence ID" value="KRH08805"/>
    <property type="gene ID" value="GLYMA_16G175600"/>
</dbReference>
<dbReference type="GeneID" id="100101902"/>
<dbReference type="Gramene" id="KRH08805">
    <property type="protein sequence ID" value="KRH08805"/>
    <property type="gene ID" value="GLYMA_16G175600"/>
</dbReference>
<dbReference type="KEGG" id="gmx:100101902"/>
<dbReference type="eggNOG" id="KOG1192">
    <property type="taxonomic scope" value="Eukaryota"/>
</dbReference>
<dbReference type="HOGENOM" id="CLU_001724_3_2_1"/>
<dbReference type="InParanoid" id="A6BM07"/>
<dbReference type="OMA" id="NITHHEE"/>
<dbReference type="OrthoDB" id="5835829at2759"/>
<dbReference type="BRENDA" id="2.4.1.170">
    <property type="organism ID" value="2483"/>
</dbReference>
<dbReference type="SABIO-RK" id="A6BM07"/>
<dbReference type="Proteomes" id="UP000008827">
    <property type="component" value="Chromosome 16"/>
</dbReference>
<dbReference type="GO" id="GO:0016757">
    <property type="term" value="F:glycosyltransferase activity"/>
    <property type="evidence" value="ECO:0000318"/>
    <property type="project" value="GO_Central"/>
</dbReference>
<dbReference type="GO" id="GO:0050004">
    <property type="term" value="F:isoflavone 7-O-glucosyltransferase activity"/>
    <property type="evidence" value="ECO:0000314"/>
    <property type="project" value="UniProtKB"/>
</dbReference>
<dbReference type="CDD" id="cd03784">
    <property type="entry name" value="GT1_Gtf-like"/>
    <property type="match status" value="1"/>
</dbReference>
<dbReference type="FunFam" id="3.40.50.2000:FF:000020">
    <property type="entry name" value="Glycosyltransferase"/>
    <property type="match status" value="1"/>
</dbReference>
<dbReference type="FunFam" id="3.40.50.2000:FF:000095">
    <property type="entry name" value="Glycosyltransferase"/>
    <property type="match status" value="1"/>
</dbReference>
<dbReference type="Gene3D" id="3.40.50.2000">
    <property type="entry name" value="Glycogen Phosphorylase B"/>
    <property type="match status" value="2"/>
</dbReference>
<dbReference type="InterPro" id="IPR050481">
    <property type="entry name" value="UDP-glycosyltransf_plant"/>
</dbReference>
<dbReference type="InterPro" id="IPR002213">
    <property type="entry name" value="UDP_glucos_trans"/>
</dbReference>
<dbReference type="InterPro" id="IPR035595">
    <property type="entry name" value="UDP_glycos_trans_CS"/>
</dbReference>
<dbReference type="PANTHER" id="PTHR48048">
    <property type="entry name" value="GLYCOSYLTRANSFERASE"/>
    <property type="match status" value="1"/>
</dbReference>
<dbReference type="PANTHER" id="PTHR48048:SF33">
    <property type="entry name" value="ISOFLAVONE 7-O-GLUCOSYLTRANSFERASE 1"/>
    <property type="match status" value="1"/>
</dbReference>
<dbReference type="Pfam" id="PF00201">
    <property type="entry name" value="UDPGT"/>
    <property type="match status" value="1"/>
</dbReference>
<dbReference type="SUPFAM" id="SSF53756">
    <property type="entry name" value="UDP-Glycosyltransferase/glycogen phosphorylase"/>
    <property type="match status" value="1"/>
</dbReference>
<dbReference type="PROSITE" id="PS00375">
    <property type="entry name" value="UDPGT"/>
    <property type="match status" value="1"/>
</dbReference>
<feature type="propeptide" id="PRO_0000418446" description="Removed in mature form" evidence="3">
    <location>
        <begin position="1"/>
        <end position="49"/>
    </location>
</feature>
<feature type="chain" id="PRO_0000418447" description="Isoflavone 7-O-glucosyltransferase 1">
    <location>
        <begin position="50"/>
        <end position="474"/>
    </location>
</feature>
<feature type="active site" description="Proton acceptor" evidence="1">
    <location>
        <position position="15"/>
    </location>
</feature>
<feature type="active site" description="Charge relay" evidence="1">
    <location>
        <position position="125"/>
    </location>
</feature>
<feature type="binding site" evidence="2">
    <location>
        <position position="15"/>
    </location>
    <ligand>
        <name>an anthocyanidin</name>
        <dbReference type="ChEBI" id="CHEBI:143576"/>
    </ligand>
</feature>
<feature type="binding site" evidence="1">
    <location>
        <position position="150"/>
    </location>
    <ligand>
        <name>UDP-alpha-D-glucose</name>
        <dbReference type="ChEBI" id="CHEBI:58885"/>
    </ligand>
</feature>
<feature type="binding site" evidence="1">
    <location>
        <position position="351"/>
    </location>
    <ligand>
        <name>UDP-alpha-D-glucose</name>
        <dbReference type="ChEBI" id="CHEBI:58885"/>
    </ligand>
</feature>
<feature type="binding site" evidence="1">
    <location>
        <position position="353"/>
    </location>
    <ligand>
        <name>UDP-alpha-D-glucose</name>
        <dbReference type="ChEBI" id="CHEBI:58885"/>
    </ligand>
</feature>
<feature type="binding site" evidence="1">
    <location>
        <position position="368"/>
    </location>
    <ligand>
        <name>UDP-alpha-D-glucose</name>
        <dbReference type="ChEBI" id="CHEBI:58885"/>
    </ligand>
</feature>
<feature type="binding site" evidence="1">
    <location>
        <position position="371"/>
    </location>
    <ligand>
        <name>UDP-alpha-D-glucose</name>
        <dbReference type="ChEBI" id="CHEBI:58885"/>
    </ligand>
</feature>
<feature type="binding site" evidence="1">
    <location>
        <position position="372"/>
    </location>
    <ligand>
        <name>UDP-alpha-D-glucose</name>
        <dbReference type="ChEBI" id="CHEBI:58885"/>
    </ligand>
</feature>
<feature type="binding site" evidence="1">
    <location>
        <position position="373"/>
    </location>
    <ligand>
        <name>UDP-alpha-D-glucose</name>
        <dbReference type="ChEBI" id="CHEBI:58885"/>
    </ligand>
</feature>
<feature type="binding site" evidence="1">
    <location>
        <position position="376"/>
    </location>
    <ligand>
        <name>UDP-alpha-D-glucose</name>
        <dbReference type="ChEBI" id="CHEBI:58885"/>
    </ligand>
</feature>
<feature type="binding site" evidence="2">
    <location>
        <position position="391"/>
    </location>
    <ligand>
        <name>an anthocyanidin</name>
        <dbReference type="ChEBI" id="CHEBI:143576"/>
    </ligand>
</feature>
<feature type="binding site" evidence="1">
    <location>
        <position position="392"/>
    </location>
    <ligand>
        <name>UDP-alpha-D-glucose</name>
        <dbReference type="ChEBI" id="CHEBI:58885"/>
    </ligand>
</feature>
<feature type="binding site" evidence="1">
    <location>
        <position position="393"/>
    </location>
    <ligand>
        <name>UDP-alpha-D-glucose</name>
        <dbReference type="ChEBI" id="CHEBI:58885"/>
    </ligand>
</feature>
<feature type="mutagenesis site" description="No effect on catalytic activity." evidence="3">
    <original>H</original>
    <variation>A</variation>
    <location>
        <position position="15"/>
    </location>
</feature>
<feature type="mutagenesis site" description="No effect on catalytic activity." evidence="3">
    <original>D</original>
    <variation>A</variation>
    <location>
        <position position="125"/>
    </location>
</feature>
<feature type="mutagenesis site" description="No effect on catalytic activity." evidence="3">
    <original>H</original>
    <variation>A</variation>
    <location>
        <position position="359"/>
    </location>
</feature>
<feature type="mutagenesis site" description="No effect on catalytic activity." evidence="3">
    <original>H</original>
    <variation>A</variation>
    <location>
        <position position="368"/>
    </location>
</feature>
<feature type="mutagenesis site" description="No effect on catalytic activity." evidence="3">
    <original>E</original>
    <variation>A</variation>
    <location>
        <position position="376"/>
    </location>
</feature>
<feature type="mutagenesis site" description="Loss of catalytic activity." evidence="3">
    <original>E</original>
    <variation>A</variation>
    <location>
        <position position="392"/>
    </location>
</feature>
<feature type="mutagenesis site" description="Increased catalytic activity." evidence="3">
    <original>E</original>
    <variation>D</variation>
    <location>
        <position position="392"/>
    </location>
</feature>
<feature type="mutagenesis site" description="No effect on catalytic activity." evidence="3">
    <original>E</original>
    <variation>A</variation>
    <location>
        <position position="456"/>
    </location>
</feature>
<sequence length="474" mass="52036">MKDTIVLYPNLGRGHLVSMVELGKLILTHHPSLSITILILTPPTTPSTTTTTLACDSNAQYIATVTATTPSITFHRVPLAALPFNTPFLPPHLLSLELTRHSTQNIAVALQTLAKASNLKAIVIDFMNFNDPKALTENLNNNVPTYFYYTSGASTLALLLYYPTIHPTLIEKKDTDQPLQIQIPGLSTITADDFPNECKDPLSYACQVFLQIAETMMGGAGIIVNTFEAIEEEAIRALSEDATVPPPLFCVGPVISAPYGEEDKGCLSWLNLQPSQSVVLLCFGSMGRFSRAQLKEIAIGLEKSEQRFLWVVRTELGGADDSAEELSLDELLPEGFLERTKEKGMVVRDWAPQAAILSHDSVGGFVTHCGWNSVLEAVCEGVPMVAWPLYAEQKMNRMVMVKEMKVALAVNENKDGFVSSTELGDRVRELMESDKGKEIRQRIFKMKMSAAEAMAEGGTSRASLDKLAKLWKQS</sequence>
<accession>A6BM07</accession>
<name>I7GT1_SOYBN</name>
<reference key="1">
    <citation type="journal article" date="2007" name="J. Biol. Chem.">
        <title>A UDP-glucose:isoflavone 7-O-glucosyltransferase from the roots of soybean (glycine max) seedlings. Purification, gene cloning, phylogenetics, and an implication for an alternative strategy of enzyme catalysis.</title>
        <authorList>
            <person name="Noguchi A."/>
            <person name="Saito A."/>
            <person name="Homma Y."/>
            <person name="Nakao M."/>
            <person name="Sasaki N."/>
            <person name="Nishino T."/>
            <person name="Takahashi S."/>
            <person name="Nakayama T."/>
        </authorList>
    </citation>
    <scope>NUCLEOTIDE SEQUENCE [MRNA]</scope>
    <scope>PROTEIN SEQUENCE OF 50-63; 121-133; 406-429 AND 470-472</scope>
    <scope>FUNCTION</scope>
    <scope>CATALYTIC ACTIVITY</scope>
    <scope>BIOPHYSICOCHEMICAL PROPERTIES</scope>
    <scope>SUBUNIT</scope>
    <scope>MUTAGENESIS OF HIS-15; ASP-125; HIS-359; HIS-368; GLU-376; GLU-392 AND GLU-456</scope>
</reference>
<reference key="2">
    <citation type="journal article" date="2010" name="Nature">
        <title>Genome sequence of the palaeopolyploid soybean.</title>
        <authorList>
            <person name="Schmutz J."/>
            <person name="Cannon S.B."/>
            <person name="Schlueter J."/>
            <person name="Ma J."/>
            <person name="Mitros T."/>
            <person name="Nelson W."/>
            <person name="Hyten D.L."/>
            <person name="Song Q."/>
            <person name="Thelen J.J."/>
            <person name="Cheng J."/>
            <person name="Xu D."/>
            <person name="Hellsten U."/>
            <person name="May G.D."/>
            <person name="Yu Y."/>
            <person name="Sakurai T."/>
            <person name="Umezawa T."/>
            <person name="Bhattacharyya M.K."/>
            <person name="Sandhu D."/>
            <person name="Valliyodan B."/>
            <person name="Lindquist E."/>
            <person name="Peto M."/>
            <person name="Grant D."/>
            <person name="Shu S."/>
            <person name="Goodstein D."/>
            <person name="Barry K."/>
            <person name="Futrell-Griggs M."/>
            <person name="Abernathy B."/>
            <person name="Du J."/>
            <person name="Tian Z."/>
            <person name="Zhu L."/>
            <person name="Gill N."/>
            <person name="Joshi T."/>
            <person name="Libault M."/>
            <person name="Sethuraman A."/>
            <person name="Zhang X.-C."/>
            <person name="Shinozaki K."/>
            <person name="Nguyen H.T."/>
            <person name="Wing R.A."/>
            <person name="Cregan P."/>
            <person name="Specht J."/>
            <person name="Grimwood J."/>
            <person name="Rokhsar D."/>
            <person name="Stacey G."/>
            <person name="Shoemaker R.C."/>
            <person name="Jackson S.A."/>
        </authorList>
    </citation>
    <scope>NUCLEOTIDE SEQUENCE [LARGE SCALE GENOMIC DNA]</scope>
    <source>
        <strain>cv. Williams 82</strain>
    </source>
</reference>
<reference key="3">
    <citation type="journal article" date="2011" name="Plant Physiol. Biochem.">
        <title>Transcripts of soybean isoflavone 7-O-glucosyltransferase and hydroxyisoflavanone dehydratase gene homologues are at least as abundant as transcripts of their well known counterparts.</title>
        <authorList>
            <person name="Livingstone J.M."/>
            <person name="Zolotarov Y."/>
            <person name="Stroemvik M.V."/>
        </authorList>
    </citation>
    <scope>TISSUE SPECIFICITY</scope>
</reference>
<protein>
    <recommendedName>
        <fullName>Isoflavone 7-O-glucosyltransferase 1</fullName>
        <ecNumber>2.4.1.170</ecNumber>
    </recommendedName>
    <alternativeName>
        <fullName>UDP-glucose:isoflavone 7-O-glucosyltransferase</fullName>
    </alternativeName>
</protein>
<keyword id="KW-0903">Direct protein sequencing</keyword>
<keyword id="KW-0328">Glycosyltransferase</keyword>
<keyword id="KW-1185">Reference proteome</keyword>
<keyword id="KW-0808">Transferase</keyword>
<organism>
    <name type="scientific">Glycine max</name>
    <name type="common">Soybean</name>
    <name type="synonym">Glycine hispida</name>
    <dbReference type="NCBI Taxonomy" id="3847"/>
    <lineage>
        <taxon>Eukaryota</taxon>
        <taxon>Viridiplantae</taxon>
        <taxon>Streptophyta</taxon>
        <taxon>Embryophyta</taxon>
        <taxon>Tracheophyta</taxon>
        <taxon>Spermatophyta</taxon>
        <taxon>Magnoliopsida</taxon>
        <taxon>eudicotyledons</taxon>
        <taxon>Gunneridae</taxon>
        <taxon>Pentapetalae</taxon>
        <taxon>rosids</taxon>
        <taxon>fabids</taxon>
        <taxon>Fabales</taxon>
        <taxon>Fabaceae</taxon>
        <taxon>Papilionoideae</taxon>
        <taxon>50 kb inversion clade</taxon>
        <taxon>NPAAA clade</taxon>
        <taxon>indigoferoid/millettioid clade</taxon>
        <taxon>Phaseoleae</taxon>
        <taxon>Glycine</taxon>
        <taxon>Glycine subgen. Soja</taxon>
    </lineage>
</organism>
<evidence type="ECO:0000250" key="1">
    <source>
        <dbReference type="UniProtKB" id="A0A0A1HA03"/>
    </source>
</evidence>
<evidence type="ECO:0000250" key="2">
    <source>
        <dbReference type="UniProtKB" id="P51094"/>
    </source>
</evidence>
<evidence type="ECO:0000269" key="3">
    <source>
    </source>
</evidence>
<evidence type="ECO:0000269" key="4">
    <source>
    </source>
</evidence>
<evidence type="ECO:0000305" key="5"/>
<gene>
    <name type="primary">GmIF7GT1</name>
    <name type="synonym">GmIF7GT</name>
    <name type="synonym">UGT88E3</name>
    <name type="ordered locus">Glyma16g29400</name>
    <name type="ORF">Gma.32181</name>
</gene>
<proteinExistence type="evidence at protein level"/>
<comment type="function">
    <text evidence="3">Involved in the biosynthesis of isoflavonoids. Specific for UDP-glucose. Can use genistein &gt; daidzein &gt; formononetin &gt; quercetin &gt; kaempferol &gt; 4,2',4',6'-tetrahydroxychalcone &gt; apigenin &gt; aureusidin &gt; esculetin &gt; naringenin as substrates, but not cyanidin, trans-p-coumaric acid, caffeic acid, benzoic acid, m- and p-hydroxybenzoic acids, salicylic acid, salicyl alcohol, and hydroquinone.</text>
</comment>
<comment type="catalytic activity">
    <reaction evidence="3">
        <text>a 7-hydroxyisoflavone + UDP-alpha-D-glucose = a 7-hydroxyisoflavone 7-O-beta-D-glucoside + UDP + H(+)</text>
        <dbReference type="Rhea" id="RHEA:56344"/>
        <dbReference type="ChEBI" id="CHEBI:15378"/>
        <dbReference type="ChEBI" id="CHEBI:55465"/>
        <dbReference type="ChEBI" id="CHEBI:58223"/>
        <dbReference type="ChEBI" id="CHEBI:58885"/>
        <dbReference type="ChEBI" id="CHEBI:140301"/>
        <dbReference type="EC" id="2.4.1.170"/>
    </reaction>
</comment>
<comment type="biophysicochemical properties">
    <kinetics>
        <KM evidence="3">3.6 uM for genistein</KM>
        <KM evidence="3">190 uM for UDP-glucose</KM>
        <text>kcat is 0.74 sec(-1)for genistein (at pH 8.5 and 30 degrees Celsius).</text>
    </kinetics>
    <phDependence>
        <text evidence="3">Optimum pH is 8.5.</text>
    </phDependence>
    <temperatureDependence>
        <text evidence="3">Optimum temperature is 45 degrees Celsius.</text>
    </temperatureDependence>
</comment>
<comment type="subunit">
    <text evidence="3">Monomer.</text>
</comment>
<comment type="tissue specificity">
    <text evidence="4">Expressed in shoots, leaves, cotyledons, epicotyls, hypocotyls, roots, pods, seeds and flowers.</text>
</comment>
<comment type="similarity">
    <text evidence="5">Belongs to the UDP-glycosyltransferase family.</text>
</comment>